<keyword id="KW-0150">Chloroplast</keyword>
<keyword id="KW-0396">Initiation factor</keyword>
<keyword id="KW-0934">Plastid</keyword>
<keyword id="KW-0648">Protein biosynthesis</keyword>
<keyword id="KW-0694">RNA-binding</keyword>
<keyword id="KW-0699">rRNA-binding</keyword>
<comment type="function">
    <text evidence="1">One of the essential components for the initiation of protein synthesis. Stabilizes the binding of IF-2 and IF-3 on the 30S subunit to which N-formylmethionyl-tRNA(fMet) subsequently binds. Helps modulate mRNA selection, yielding the 30S pre-initiation complex (PIC). Upon addition of the 50S ribosomal subunit IF-1, IF-2 and IF-3 are released leaving the mature 70S translation initiation complex.</text>
</comment>
<comment type="subunit">
    <text evidence="1">Component of the 30S ribosomal translation pre-initiation complex which assembles on the 30S ribosome in the order IF-2 and IF-3, IF-1 and N-formylmethionyl-tRNA(fMet); mRNA recruitment can occur at any time during PIC assembly.</text>
</comment>
<comment type="subcellular location">
    <subcellularLocation>
        <location evidence="1">Plastid</location>
        <location evidence="1">Chloroplast</location>
    </subcellularLocation>
</comment>
<comment type="similarity">
    <text evidence="1">Belongs to the IF-1 family.</text>
</comment>
<organism>
    <name type="scientific">Cabomba caroliniana</name>
    <name type="common">Carolina fanwort</name>
    <dbReference type="NCBI Taxonomy" id="4426"/>
    <lineage>
        <taxon>Eukaryota</taxon>
        <taxon>Viridiplantae</taxon>
        <taxon>Streptophyta</taxon>
        <taxon>Embryophyta</taxon>
        <taxon>Tracheophyta</taxon>
        <taxon>Spermatophyta</taxon>
        <taxon>Magnoliopsida</taxon>
        <taxon>Nymphaeales</taxon>
        <taxon>Cabombaceae</taxon>
        <taxon>Cabomba</taxon>
    </lineage>
</organism>
<protein>
    <recommendedName>
        <fullName evidence="1">Translation initiation factor IF-1, chloroplastic</fullName>
    </recommendedName>
</protein>
<sequence>MKEQKLIHEGLITESLPNGMFWVRLDNEDLVLGYVSGRIRRSFIRILPGDRVKIEVSRYDSTRGRIIYRLRNKDSND</sequence>
<evidence type="ECO:0000255" key="1">
    <source>
        <dbReference type="HAMAP-Rule" id="MF_00075"/>
    </source>
</evidence>
<proteinExistence type="inferred from homology"/>
<accession>Q95GN8</accession>
<dbReference type="EMBL" id="AF347616">
    <property type="protein sequence ID" value="AAK38845.1"/>
    <property type="molecule type" value="Genomic_DNA"/>
</dbReference>
<dbReference type="RefSeq" id="YP_009310553.1">
    <property type="nucleotide sequence ID" value="NC_031505.1"/>
</dbReference>
<dbReference type="RefSeq" id="YP_009310588.1">
    <property type="nucleotide sequence ID" value="NC_031505.1"/>
</dbReference>
<dbReference type="SMR" id="Q95GN8"/>
<dbReference type="GeneID" id="29991317"/>
<dbReference type="GeneID" id="29991375"/>
<dbReference type="GO" id="GO:0009507">
    <property type="term" value="C:chloroplast"/>
    <property type="evidence" value="ECO:0007669"/>
    <property type="project" value="UniProtKB-SubCell"/>
</dbReference>
<dbReference type="GO" id="GO:0005829">
    <property type="term" value="C:cytosol"/>
    <property type="evidence" value="ECO:0007669"/>
    <property type="project" value="TreeGrafter"/>
</dbReference>
<dbReference type="GO" id="GO:0043022">
    <property type="term" value="F:ribosome binding"/>
    <property type="evidence" value="ECO:0007669"/>
    <property type="project" value="UniProtKB-UniRule"/>
</dbReference>
<dbReference type="GO" id="GO:0019843">
    <property type="term" value="F:rRNA binding"/>
    <property type="evidence" value="ECO:0007669"/>
    <property type="project" value="UniProtKB-UniRule"/>
</dbReference>
<dbReference type="GO" id="GO:0003743">
    <property type="term" value="F:translation initiation factor activity"/>
    <property type="evidence" value="ECO:0007669"/>
    <property type="project" value="UniProtKB-UniRule"/>
</dbReference>
<dbReference type="CDD" id="cd04451">
    <property type="entry name" value="S1_IF1"/>
    <property type="match status" value="1"/>
</dbReference>
<dbReference type="FunFam" id="2.40.50.140:FF:000019">
    <property type="entry name" value="Translation initiation factor IF-1, chloroplastic"/>
    <property type="match status" value="1"/>
</dbReference>
<dbReference type="Gene3D" id="2.40.50.140">
    <property type="entry name" value="Nucleic acid-binding proteins"/>
    <property type="match status" value="1"/>
</dbReference>
<dbReference type="HAMAP" id="MF_00075">
    <property type="entry name" value="IF_1"/>
    <property type="match status" value="1"/>
</dbReference>
<dbReference type="InterPro" id="IPR012340">
    <property type="entry name" value="NA-bd_OB-fold"/>
</dbReference>
<dbReference type="InterPro" id="IPR006196">
    <property type="entry name" value="RNA-binding_domain_S1_IF1"/>
</dbReference>
<dbReference type="InterPro" id="IPR003029">
    <property type="entry name" value="S1_domain"/>
</dbReference>
<dbReference type="InterPro" id="IPR004368">
    <property type="entry name" value="TIF_IF1"/>
</dbReference>
<dbReference type="NCBIfam" id="TIGR00008">
    <property type="entry name" value="infA"/>
    <property type="match status" value="1"/>
</dbReference>
<dbReference type="PANTHER" id="PTHR33370">
    <property type="entry name" value="TRANSLATION INITIATION FACTOR IF-1, CHLOROPLASTIC"/>
    <property type="match status" value="1"/>
</dbReference>
<dbReference type="PANTHER" id="PTHR33370:SF1">
    <property type="entry name" value="TRANSLATION INITIATION FACTOR IF-1, CHLOROPLASTIC"/>
    <property type="match status" value="1"/>
</dbReference>
<dbReference type="Pfam" id="PF01176">
    <property type="entry name" value="eIF-1a"/>
    <property type="match status" value="1"/>
</dbReference>
<dbReference type="SMART" id="SM00316">
    <property type="entry name" value="S1"/>
    <property type="match status" value="1"/>
</dbReference>
<dbReference type="SUPFAM" id="SSF50249">
    <property type="entry name" value="Nucleic acid-binding proteins"/>
    <property type="match status" value="1"/>
</dbReference>
<dbReference type="PROSITE" id="PS50832">
    <property type="entry name" value="S1_IF1_TYPE"/>
    <property type="match status" value="1"/>
</dbReference>
<gene>
    <name evidence="1" type="primary">infA</name>
</gene>
<feature type="chain" id="PRO_0000095922" description="Translation initiation factor IF-1, chloroplastic">
    <location>
        <begin position="1"/>
        <end position="77"/>
    </location>
</feature>
<feature type="domain" description="S1-like" evidence="1">
    <location>
        <begin position="1"/>
        <end position="71"/>
    </location>
</feature>
<geneLocation type="chloroplast"/>
<name>IF1C_CABCA</name>
<reference key="1">
    <citation type="journal article" date="2001" name="Plant Cell">
        <title>Many parallel losses of infA from chloroplast DNA during angiosperm evolution with multiple independent transfers to the nucleus.</title>
        <authorList>
            <person name="Millen R.S."/>
            <person name="Olmstead R.G."/>
            <person name="Adams K.L."/>
            <person name="Palmer J.D."/>
            <person name="Lao N.T."/>
            <person name="Heggie L."/>
            <person name="Kavanagh T.A."/>
            <person name="Hibberd J.M."/>
            <person name="Gray J.C."/>
            <person name="Morden C.W."/>
            <person name="Calie P.J."/>
            <person name="Jermiin L.S."/>
            <person name="Wolfe K.H."/>
        </authorList>
    </citation>
    <scope>NUCLEOTIDE SEQUENCE [GENOMIC DNA]</scope>
</reference>